<name>ARO1_SCHPO</name>
<protein>
    <recommendedName>
        <fullName evidence="1">Pentafunctional AROM polypeptide</fullName>
    </recommendedName>
    <domain>
        <recommendedName>
            <fullName evidence="1">3-dehydroquinate synthase</fullName>
            <shortName evidence="1">DHQS</shortName>
            <ecNumber evidence="1">4.2.3.4</ecNumber>
        </recommendedName>
    </domain>
    <domain>
        <recommendedName>
            <fullName evidence="1">3-phosphoshikimate 1-carboxyvinyltransferase</fullName>
            <ecNumber evidence="1">2.5.1.19</ecNumber>
        </recommendedName>
        <alternativeName>
            <fullName evidence="1">5-enolpyruvylshikimate-3-phosphate synthase</fullName>
            <shortName evidence="1">EPSP synthase</shortName>
            <shortName evidence="1">EPSPS</shortName>
        </alternativeName>
    </domain>
    <domain>
        <recommendedName>
            <fullName evidence="1">Shikimate kinase</fullName>
            <shortName evidence="1">SK</shortName>
            <ecNumber evidence="1">2.7.1.71</ecNumber>
        </recommendedName>
    </domain>
    <domain>
        <recommendedName>
            <fullName evidence="1">3-dehydroquinate dehydratase</fullName>
            <shortName evidence="1">3-dehydroquinase</shortName>
            <ecNumber evidence="1">4.2.1.10</ecNumber>
        </recommendedName>
    </domain>
    <domain>
        <recommendedName>
            <fullName evidence="1">Shikimate dehydrogenase</fullName>
            <ecNumber evidence="1">1.1.1.25</ecNumber>
        </recommendedName>
    </domain>
</protein>
<reference key="1">
    <citation type="journal article" date="2002" name="Nature">
        <title>The genome sequence of Schizosaccharomyces pombe.</title>
        <authorList>
            <person name="Wood V."/>
            <person name="Gwilliam R."/>
            <person name="Rajandream M.A."/>
            <person name="Lyne M.H."/>
            <person name="Lyne R."/>
            <person name="Stewart A."/>
            <person name="Sgouros J.G."/>
            <person name="Peat N."/>
            <person name="Hayles J."/>
            <person name="Baker S.G."/>
            <person name="Basham D."/>
            <person name="Bowman S."/>
            <person name="Brooks K."/>
            <person name="Brown D."/>
            <person name="Brown S."/>
            <person name="Chillingworth T."/>
            <person name="Churcher C.M."/>
            <person name="Collins M."/>
            <person name="Connor R."/>
            <person name="Cronin A."/>
            <person name="Davis P."/>
            <person name="Feltwell T."/>
            <person name="Fraser A."/>
            <person name="Gentles S."/>
            <person name="Goble A."/>
            <person name="Hamlin N."/>
            <person name="Harris D.E."/>
            <person name="Hidalgo J."/>
            <person name="Hodgson G."/>
            <person name="Holroyd S."/>
            <person name="Hornsby T."/>
            <person name="Howarth S."/>
            <person name="Huckle E.J."/>
            <person name="Hunt S."/>
            <person name="Jagels K."/>
            <person name="James K.D."/>
            <person name="Jones L."/>
            <person name="Jones M."/>
            <person name="Leather S."/>
            <person name="McDonald S."/>
            <person name="McLean J."/>
            <person name="Mooney P."/>
            <person name="Moule S."/>
            <person name="Mungall K.L."/>
            <person name="Murphy L.D."/>
            <person name="Niblett D."/>
            <person name="Odell C."/>
            <person name="Oliver K."/>
            <person name="O'Neil S."/>
            <person name="Pearson D."/>
            <person name="Quail M.A."/>
            <person name="Rabbinowitsch E."/>
            <person name="Rutherford K.M."/>
            <person name="Rutter S."/>
            <person name="Saunders D."/>
            <person name="Seeger K."/>
            <person name="Sharp S."/>
            <person name="Skelton J."/>
            <person name="Simmonds M.N."/>
            <person name="Squares R."/>
            <person name="Squares S."/>
            <person name="Stevens K."/>
            <person name="Taylor K."/>
            <person name="Taylor R.G."/>
            <person name="Tivey A."/>
            <person name="Walsh S.V."/>
            <person name="Warren T."/>
            <person name="Whitehead S."/>
            <person name="Woodward J.R."/>
            <person name="Volckaert G."/>
            <person name="Aert R."/>
            <person name="Robben J."/>
            <person name="Grymonprez B."/>
            <person name="Weltjens I."/>
            <person name="Vanstreels E."/>
            <person name="Rieger M."/>
            <person name="Schaefer M."/>
            <person name="Mueller-Auer S."/>
            <person name="Gabel C."/>
            <person name="Fuchs M."/>
            <person name="Duesterhoeft A."/>
            <person name="Fritzc C."/>
            <person name="Holzer E."/>
            <person name="Moestl D."/>
            <person name="Hilbert H."/>
            <person name="Borzym K."/>
            <person name="Langer I."/>
            <person name="Beck A."/>
            <person name="Lehrach H."/>
            <person name="Reinhardt R."/>
            <person name="Pohl T.M."/>
            <person name="Eger P."/>
            <person name="Zimmermann W."/>
            <person name="Wedler H."/>
            <person name="Wambutt R."/>
            <person name="Purnelle B."/>
            <person name="Goffeau A."/>
            <person name="Cadieu E."/>
            <person name="Dreano S."/>
            <person name="Gloux S."/>
            <person name="Lelaure V."/>
            <person name="Mottier S."/>
            <person name="Galibert F."/>
            <person name="Aves S.J."/>
            <person name="Xiang Z."/>
            <person name="Hunt C."/>
            <person name="Moore K."/>
            <person name="Hurst S.M."/>
            <person name="Lucas M."/>
            <person name="Rochet M."/>
            <person name="Gaillardin C."/>
            <person name="Tallada V.A."/>
            <person name="Garzon A."/>
            <person name="Thode G."/>
            <person name="Daga R.R."/>
            <person name="Cruzado L."/>
            <person name="Jimenez J."/>
            <person name="Sanchez M."/>
            <person name="del Rey F."/>
            <person name="Benito J."/>
            <person name="Dominguez A."/>
            <person name="Revuelta J.L."/>
            <person name="Moreno S."/>
            <person name="Armstrong J."/>
            <person name="Forsburg S.L."/>
            <person name="Cerutti L."/>
            <person name="Lowe T."/>
            <person name="McCombie W.R."/>
            <person name="Paulsen I."/>
            <person name="Potashkin J."/>
            <person name="Shpakovski G.V."/>
            <person name="Ussery D."/>
            <person name="Barrell B.G."/>
            <person name="Nurse P."/>
        </authorList>
    </citation>
    <scope>NUCLEOTIDE SEQUENCE [LARGE SCALE GENOMIC DNA]</scope>
    <source>
        <strain>972 / ATCC 24843</strain>
    </source>
</reference>
<evidence type="ECO:0000255" key="1">
    <source>
        <dbReference type="HAMAP-Rule" id="MF_03143"/>
    </source>
</evidence>
<evidence type="ECO:0007829" key="2">
    <source>
        <dbReference type="PDB" id="5SWV"/>
    </source>
</evidence>
<accession>Q9P7R0</accession>
<sequence>MSNESNIITVPILGKDTVRVGFGIHQYICTEILENFKSSTYVVITDSNIAPLYLEKIESTFNKSIKDAKAEARLLTYVIPPGESSKCRAMKAEIEDWLLTQSCTRDTILIAMGGGVIGDLVGYVAASFMRGIRFIQMPTTLLAMVDSSIGGKTGIDTPLGKNLVGAFWQPLRVYVDMVFLHTLPPRQVINGLSEIIKTAAMWNENDFQLLENNSAVLLDALNKPSVPGEYKFDSIKPLLQKIILSSIRTKCEVVTLDEHEGGLRNLLNFGHSIGHAYEAILYPQILHGECVAIGMVKEAELARYLGILKPNAVGRLTKCLVSYNLPISVNDPKVKKYASFKHCPVEKLIEYMAVDKKNQGSKKRIVILKAIGETYEKHATVVSDDDIRFILSRDVKVDEFTKSSWDVVVTPPGSKSISNRALVLAAMGNGTCRLTNMLHSDDTQFMMSALESLGAATFSWEDGGETLVVKGNGGKLAVPKEELYLGNAGTAARFLTGIAALVSSKDGAKVVLTGNHRMKVRPIGPLVDALRANGCEINYLEKQGSLPLDLSSKNGLKGGIIELAATVSSQYVSSILMCAPYASQPVTLKLVGGKPISQLYIDMTIAMMASFGVNVTKSTTEENTYNIPCGKYQNPPHYEIESDASSATYPLAIAAITGTKCTVPNIGSASLQGDARFACDVLRPMGCTVEQTATSTTVQGPPKGTLKPLESIDMETMTDAFLTASVVAAVACNVSEGDPVTRITGIANQRVKECNRIAAMVHELAKFGVRTGELEDGIYIFGKNYKELKKPEEGIYTYDDHRIAMSFSVLSLICPSRTLIIDKACVEKTWPYWWDVLHQSFGVKLTGATSVASDPLKGSISKNASIILIGMRGAGKTTIGKIIAKQLNFKFLDLDELLEDYLEMPIAEVIFRMGWDAFRLEEHKVLRKFITEHPEGYVAASGGGVIEMDESRNLLSNFVKEGGIVLHVHRNLEHIKSYLSEDQTRPTYKDQESIDDVYKRRHVWYRECRSHYFISPVLSNQVIDEKIQYSMSRFLDVVTGSSQVLQKFKTKKRSTFLTLNYPRIEDALPTLRDVTVGCDAIEVRVDYLKDPKSSNGISSLDFVAEQISLLRCSTTLPIIFTIRTISQGGLFPNDKEEEAKELMLSAMRYGCDFVDVELGWSSETINILYQHKGYTKLIMSWHDLSGTWSWARPHEWMQKVELASSYADVIKLVGMANNLNDNLELEEFRTRITNSMDIPLILFNMGRFGQLSRILNKFMTPVTHPLLPSKAAPGQLTVKQLNEARVLIGEILPEKFFLFGKPIKHSRSPILHSTAYELLGLPHTYEAFETDTVDEVQKVLNLPDFGGANVTIPYKLSVMKFMDELSDEARFFGAVNTIIPIRIGDKLVLRGDNTDWRGIYDTFANALDGVSLRDTNGLVIGAGGTSRAAIYSLHRLGVSRIYLLNRTLANSYRVQDVFPPDYNIHIIDSDNIPSEELSSVTLSAVVSTIPADIELPEKVASVIKALLANKADGGVFLDMAYKPLHTPLMAVASDLEWKCCNGLEALVRQGLASFHLWTGMTAPFDAVYQKVIE</sequence>
<comment type="function">
    <text evidence="1">The AROM polypeptide catalyzes 5 consecutive enzymatic reactions in prechorismate polyaromatic amino acid biosynthesis.</text>
</comment>
<comment type="catalytic activity">
    <reaction evidence="1">
        <text>7-phospho-2-dehydro-3-deoxy-D-arabino-heptonate = 3-dehydroquinate + phosphate</text>
        <dbReference type="Rhea" id="RHEA:21968"/>
        <dbReference type="ChEBI" id="CHEBI:32364"/>
        <dbReference type="ChEBI" id="CHEBI:43474"/>
        <dbReference type="ChEBI" id="CHEBI:58394"/>
        <dbReference type="EC" id="4.2.3.4"/>
    </reaction>
</comment>
<comment type="catalytic activity">
    <reaction evidence="1">
        <text>3-dehydroquinate = 3-dehydroshikimate + H2O</text>
        <dbReference type="Rhea" id="RHEA:21096"/>
        <dbReference type="ChEBI" id="CHEBI:15377"/>
        <dbReference type="ChEBI" id="CHEBI:16630"/>
        <dbReference type="ChEBI" id="CHEBI:32364"/>
        <dbReference type="EC" id="4.2.1.10"/>
    </reaction>
</comment>
<comment type="catalytic activity">
    <reaction evidence="1">
        <text>shikimate + NADP(+) = 3-dehydroshikimate + NADPH + H(+)</text>
        <dbReference type="Rhea" id="RHEA:17737"/>
        <dbReference type="ChEBI" id="CHEBI:15378"/>
        <dbReference type="ChEBI" id="CHEBI:16630"/>
        <dbReference type="ChEBI" id="CHEBI:36208"/>
        <dbReference type="ChEBI" id="CHEBI:57783"/>
        <dbReference type="ChEBI" id="CHEBI:58349"/>
        <dbReference type="EC" id="1.1.1.25"/>
    </reaction>
</comment>
<comment type="catalytic activity">
    <reaction evidence="1">
        <text>shikimate + ATP = 3-phosphoshikimate + ADP + H(+)</text>
        <dbReference type="Rhea" id="RHEA:13121"/>
        <dbReference type="ChEBI" id="CHEBI:15378"/>
        <dbReference type="ChEBI" id="CHEBI:30616"/>
        <dbReference type="ChEBI" id="CHEBI:36208"/>
        <dbReference type="ChEBI" id="CHEBI:145989"/>
        <dbReference type="ChEBI" id="CHEBI:456216"/>
        <dbReference type="EC" id="2.7.1.71"/>
    </reaction>
</comment>
<comment type="catalytic activity">
    <reaction evidence="1">
        <text>3-phosphoshikimate + phosphoenolpyruvate = 5-O-(1-carboxyvinyl)-3-phosphoshikimate + phosphate</text>
        <dbReference type="Rhea" id="RHEA:21256"/>
        <dbReference type="ChEBI" id="CHEBI:43474"/>
        <dbReference type="ChEBI" id="CHEBI:57701"/>
        <dbReference type="ChEBI" id="CHEBI:58702"/>
        <dbReference type="ChEBI" id="CHEBI:145989"/>
        <dbReference type="EC" id="2.5.1.19"/>
    </reaction>
</comment>
<comment type="cofactor">
    <cofactor evidence="1">
        <name>Zn(2+)</name>
        <dbReference type="ChEBI" id="CHEBI:29105"/>
    </cofactor>
    <text evidence="1">Binds 2 Zn(2+) ions per subunit.</text>
</comment>
<comment type="pathway">
    <text evidence="1">Metabolic intermediate biosynthesis; chorismate biosynthesis; chorismate from D-erythrose 4-phosphate and phosphoenolpyruvate: step 2/7.</text>
</comment>
<comment type="pathway">
    <text evidence="1">Metabolic intermediate biosynthesis; chorismate biosynthesis; chorismate from D-erythrose 4-phosphate and phosphoenolpyruvate: step 3/7.</text>
</comment>
<comment type="pathway">
    <text evidence="1">Metabolic intermediate biosynthesis; chorismate biosynthesis; chorismate from D-erythrose 4-phosphate and phosphoenolpyruvate: step 4/7.</text>
</comment>
<comment type="pathway">
    <text evidence="1">Metabolic intermediate biosynthesis; chorismate biosynthesis; chorismate from D-erythrose 4-phosphate and phosphoenolpyruvate: step 5/7.</text>
</comment>
<comment type="pathway">
    <text evidence="1">Metabolic intermediate biosynthesis; chorismate biosynthesis; chorismate from D-erythrose 4-phosphate and phosphoenolpyruvate: step 6/7.</text>
</comment>
<comment type="subunit">
    <text evidence="1">Homodimer.</text>
</comment>
<comment type="subcellular location">
    <subcellularLocation>
        <location evidence="1">Cytoplasm</location>
    </subcellularLocation>
</comment>
<comment type="similarity">
    <text evidence="1">In the N-terminal section; belongs to the sugar phosphate cyclases superfamily. Dehydroquinate synthase family.</text>
</comment>
<comment type="similarity">
    <text evidence="1">In the 2nd section; belongs to the EPSP synthase family.</text>
</comment>
<comment type="similarity">
    <text evidence="1">In the 3rd section; belongs to the shikimate kinase family.</text>
</comment>
<comment type="similarity">
    <text evidence="1">In the 4th section; belongs to the type-I 3-dehydroquinase family.</text>
</comment>
<comment type="similarity">
    <text evidence="1">In the C-terminal section; belongs to the shikimate dehydrogenase family.</text>
</comment>
<dbReference type="EC" id="4.2.3.4" evidence="1"/>
<dbReference type="EC" id="2.5.1.19" evidence="1"/>
<dbReference type="EC" id="2.7.1.71" evidence="1"/>
<dbReference type="EC" id="4.2.1.10" evidence="1"/>
<dbReference type="EC" id="1.1.1.25" evidence="1"/>
<dbReference type="EMBL" id="CU329670">
    <property type="protein sequence ID" value="CAB75770.1"/>
    <property type="molecule type" value="Genomic_DNA"/>
</dbReference>
<dbReference type="PIR" id="T50113">
    <property type="entry name" value="T50113"/>
</dbReference>
<dbReference type="RefSeq" id="NP_594681.1">
    <property type="nucleotide sequence ID" value="NM_001020110.2"/>
</dbReference>
<dbReference type="PDB" id="5SWV">
    <property type="method" value="X-ray"/>
    <property type="resolution" value="2.65 A"/>
    <property type="chains" value="C=1043-1573"/>
</dbReference>
<dbReference type="PDBsum" id="5SWV"/>
<dbReference type="SMR" id="Q9P7R0"/>
<dbReference type="BioGRID" id="278591">
    <property type="interactions" value="7"/>
</dbReference>
<dbReference type="FunCoup" id="Q9P7R0">
    <property type="interactions" value="115"/>
</dbReference>
<dbReference type="STRING" id="284812.Q9P7R0"/>
<dbReference type="iPTMnet" id="Q9P7R0"/>
<dbReference type="PaxDb" id="4896-SPAC1834.02.1"/>
<dbReference type="EnsemblFungi" id="SPAC1834.02.1">
    <property type="protein sequence ID" value="SPAC1834.02.1:pep"/>
    <property type="gene ID" value="SPAC1834.02"/>
</dbReference>
<dbReference type="GeneID" id="2542115"/>
<dbReference type="KEGG" id="spo:2542115"/>
<dbReference type="PomBase" id="SPAC1834.02">
    <property type="gene designation" value="aro1"/>
</dbReference>
<dbReference type="VEuPathDB" id="FungiDB:SPAC1834.02"/>
<dbReference type="eggNOG" id="KOG0692">
    <property type="taxonomic scope" value="Eukaryota"/>
</dbReference>
<dbReference type="HOGENOM" id="CLU_001201_1_2_1"/>
<dbReference type="InParanoid" id="Q9P7R0"/>
<dbReference type="OMA" id="SWANMSW"/>
<dbReference type="PhylomeDB" id="Q9P7R0"/>
<dbReference type="UniPathway" id="UPA00053">
    <property type="reaction ID" value="UER00085"/>
</dbReference>
<dbReference type="UniPathway" id="UPA00053">
    <property type="reaction ID" value="UER00086"/>
</dbReference>
<dbReference type="UniPathway" id="UPA00053">
    <property type="reaction ID" value="UER00087"/>
</dbReference>
<dbReference type="UniPathway" id="UPA00053">
    <property type="reaction ID" value="UER00088"/>
</dbReference>
<dbReference type="UniPathway" id="UPA00053">
    <property type="reaction ID" value="UER00089"/>
</dbReference>
<dbReference type="PRO" id="PR:Q9P7R0"/>
<dbReference type="Proteomes" id="UP000002485">
    <property type="component" value="Chromosome I"/>
</dbReference>
<dbReference type="GO" id="GO:0005829">
    <property type="term" value="C:cytosol"/>
    <property type="evidence" value="ECO:0007005"/>
    <property type="project" value="PomBase"/>
</dbReference>
<dbReference type="GO" id="GO:0003855">
    <property type="term" value="F:3-dehydroquinate dehydratase activity"/>
    <property type="evidence" value="ECO:0000266"/>
    <property type="project" value="PomBase"/>
</dbReference>
<dbReference type="GO" id="GO:0003856">
    <property type="term" value="F:3-dehydroquinate synthase activity"/>
    <property type="evidence" value="ECO:0000266"/>
    <property type="project" value="PomBase"/>
</dbReference>
<dbReference type="GO" id="GO:0003866">
    <property type="term" value="F:3-phosphoshikimate 1-carboxyvinyltransferase activity"/>
    <property type="evidence" value="ECO:0000318"/>
    <property type="project" value="GO_Central"/>
</dbReference>
<dbReference type="GO" id="GO:0005524">
    <property type="term" value="F:ATP binding"/>
    <property type="evidence" value="ECO:0007669"/>
    <property type="project" value="UniProtKB-UniRule"/>
</dbReference>
<dbReference type="GO" id="GO:0046872">
    <property type="term" value="F:metal ion binding"/>
    <property type="evidence" value="ECO:0007669"/>
    <property type="project" value="UniProtKB-UniRule"/>
</dbReference>
<dbReference type="GO" id="GO:0004764">
    <property type="term" value="F:shikimate 3-dehydrogenase (NADP+) activity"/>
    <property type="evidence" value="ECO:0000266"/>
    <property type="project" value="PomBase"/>
</dbReference>
<dbReference type="GO" id="GO:0004765">
    <property type="term" value="F:shikimate kinase activity"/>
    <property type="evidence" value="ECO:0000266"/>
    <property type="project" value="PomBase"/>
</dbReference>
<dbReference type="GO" id="GO:0008652">
    <property type="term" value="P:amino acid biosynthetic process"/>
    <property type="evidence" value="ECO:0007669"/>
    <property type="project" value="UniProtKB-KW"/>
</dbReference>
<dbReference type="GO" id="GO:0009073">
    <property type="term" value="P:aromatic amino acid family biosynthetic process"/>
    <property type="evidence" value="ECO:0007669"/>
    <property type="project" value="UniProtKB-UniRule"/>
</dbReference>
<dbReference type="GO" id="GO:0009423">
    <property type="term" value="P:chorismate biosynthetic process"/>
    <property type="evidence" value="ECO:0000318"/>
    <property type="project" value="GO_Central"/>
</dbReference>
<dbReference type="CDD" id="cd00502">
    <property type="entry name" value="DHQase_I"/>
    <property type="match status" value="1"/>
</dbReference>
<dbReference type="CDD" id="cd08195">
    <property type="entry name" value="DHQS"/>
    <property type="match status" value="1"/>
</dbReference>
<dbReference type="CDD" id="cd01556">
    <property type="entry name" value="EPSP_synthase"/>
    <property type="match status" value="1"/>
</dbReference>
<dbReference type="CDD" id="cd01065">
    <property type="entry name" value="NAD_bind_Shikimate_DH"/>
    <property type="match status" value="1"/>
</dbReference>
<dbReference type="CDD" id="cd00464">
    <property type="entry name" value="SK"/>
    <property type="match status" value="1"/>
</dbReference>
<dbReference type="FunFam" id="1.20.1090.10:FF:000007">
    <property type="entry name" value="Pentafunctional AROM polypeptide"/>
    <property type="match status" value="1"/>
</dbReference>
<dbReference type="FunFam" id="3.20.20.70:FF:000135">
    <property type="entry name" value="Pentafunctional AROM polypeptide"/>
    <property type="match status" value="1"/>
</dbReference>
<dbReference type="FunFam" id="3.40.50.10860:FF:000015">
    <property type="entry name" value="Pentafunctional AROM polypeptide"/>
    <property type="match status" value="1"/>
</dbReference>
<dbReference type="FunFam" id="3.40.50.1970:FF:000007">
    <property type="entry name" value="Pentafunctional AROM polypeptide"/>
    <property type="match status" value="1"/>
</dbReference>
<dbReference type="FunFam" id="3.40.50.300:FF:001256">
    <property type="entry name" value="Pentafunctional AROM polypeptide"/>
    <property type="match status" value="1"/>
</dbReference>
<dbReference type="FunFam" id="3.40.50.720:FF:001275">
    <property type="entry name" value="Pentafunctional AROM polypeptide"/>
    <property type="match status" value="1"/>
</dbReference>
<dbReference type="FunFam" id="3.65.10.10:FF:000007">
    <property type="entry name" value="Pentafunctional AROM polypeptide"/>
    <property type="match status" value="1"/>
</dbReference>
<dbReference type="FunFam" id="3.65.10.10:FF:000008">
    <property type="entry name" value="Pentafunctional AROM polypeptide"/>
    <property type="match status" value="1"/>
</dbReference>
<dbReference type="Gene3D" id="3.40.50.1970">
    <property type="match status" value="1"/>
</dbReference>
<dbReference type="Gene3D" id="3.20.20.70">
    <property type="entry name" value="Aldolase class I"/>
    <property type="match status" value="1"/>
</dbReference>
<dbReference type="Gene3D" id="1.20.1090.10">
    <property type="entry name" value="Dehydroquinate synthase-like - alpha domain"/>
    <property type="match status" value="1"/>
</dbReference>
<dbReference type="Gene3D" id="3.65.10.10">
    <property type="entry name" value="Enolpyruvate transferase domain"/>
    <property type="match status" value="2"/>
</dbReference>
<dbReference type="Gene3D" id="3.40.50.10860">
    <property type="entry name" value="Leucine Dehydrogenase, chain A, domain 1"/>
    <property type="match status" value="1"/>
</dbReference>
<dbReference type="Gene3D" id="3.40.50.720">
    <property type="entry name" value="NAD(P)-binding Rossmann-like Domain"/>
    <property type="match status" value="1"/>
</dbReference>
<dbReference type="Gene3D" id="3.40.50.300">
    <property type="entry name" value="P-loop containing nucleotide triphosphate hydrolases"/>
    <property type="match status" value="1"/>
</dbReference>
<dbReference type="HAMAP" id="MF_00210">
    <property type="entry name" value="EPSP_synth"/>
    <property type="match status" value="1"/>
</dbReference>
<dbReference type="HAMAP" id="MF_03143">
    <property type="entry name" value="Pentafunct_AroM"/>
    <property type="match status" value="1"/>
</dbReference>
<dbReference type="HAMAP" id="MF_00109">
    <property type="entry name" value="Shikimate_kinase"/>
    <property type="match status" value="1"/>
</dbReference>
<dbReference type="InterPro" id="IPR013785">
    <property type="entry name" value="Aldolase_TIM"/>
</dbReference>
<dbReference type="InterPro" id="IPR046346">
    <property type="entry name" value="Aminoacid_DH-like_N_sf"/>
</dbReference>
<dbReference type="InterPro" id="IPR016037">
    <property type="entry name" value="DHQ_synth_AroB"/>
</dbReference>
<dbReference type="InterPro" id="IPR030960">
    <property type="entry name" value="DHQS/DOIS_N"/>
</dbReference>
<dbReference type="InterPro" id="IPR056179">
    <property type="entry name" value="DHQS_C"/>
</dbReference>
<dbReference type="InterPro" id="IPR001381">
    <property type="entry name" value="DHquinase_I"/>
</dbReference>
<dbReference type="InterPro" id="IPR001986">
    <property type="entry name" value="Enolpyruvate_Tfrase_dom"/>
</dbReference>
<dbReference type="InterPro" id="IPR036968">
    <property type="entry name" value="Enolpyruvate_Tfrase_sf"/>
</dbReference>
<dbReference type="InterPro" id="IPR006264">
    <property type="entry name" value="EPSP_synthase"/>
</dbReference>
<dbReference type="InterPro" id="IPR023193">
    <property type="entry name" value="EPSP_synthase_CS"/>
</dbReference>
<dbReference type="InterPro" id="IPR036291">
    <property type="entry name" value="NAD(P)-bd_dom_sf"/>
</dbReference>
<dbReference type="InterPro" id="IPR027417">
    <property type="entry name" value="P-loop_NTPase"/>
</dbReference>
<dbReference type="InterPro" id="IPR008289">
    <property type="entry name" value="Pentafunct_AroM"/>
</dbReference>
<dbReference type="InterPro" id="IPR013792">
    <property type="entry name" value="RNA3'P_cycl/enolpyr_Trfase_a/b"/>
</dbReference>
<dbReference type="InterPro" id="IPR041121">
    <property type="entry name" value="SDH_C"/>
</dbReference>
<dbReference type="InterPro" id="IPR031322">
    <property type="entry name" value="Shikimate/glucono_kinase"/>
</dbReference>
<dbReference type="InterPro" id="IPR013708">
    <property type="entry name" value="Shikimate_DH-bd_N"/>
</dbReference>
<dbReference type="InterPro" id="IPR010110">
    <property type="entry name" value="Shikimate_DH_AroM-type"/>
</dbReference>
<dbReference type="InterPro" id="IPR000623">
    <property type="entry name" value="Shikimate_kinase/TSH1"/>
</dbReference>
<dbReference type="NCBIfam" id="TIGR01356">
    <property type="entry name" value="aroA"/>
    <property type="match status" value="1"/>
</dbReference>
<dbReference type="NCBIfam" id="TIGR01357">
    <property type="entry name" value="aroB"/>
    <property type="match status" value="1"/>
</dbReference>
<dbReference type="NCBIfam" id="TIGR01093">
    <property type="entry name" value="aroD"/>
    <property type="match status" value="1"/>
</dbReference>
<dbReference type="NCBIfam" id="TIGR01809">
    <property type="entry name" value="Shik-DH-AROM"/>
    <property type="match status" value="1"/>
</dbReference>
<dbReference type="PANTHER" id="PTHR21090">
    <property type="entry name" value="AROM/DEHYDROQUINATE SYNTHASE"/>
    <property type="match status" value="1"/>
</dbReference>
<dbReference type="PANTHER" id="PTHR21090:SF5">
    <property type="entry name" value="PENTAFUNCTIONAL AROM POLYPEPTIDE"/>
    <property type="match status" value="1"/>
</dbReference>
<dbReference type="Pfam" id="PF01761">
    <property type="entry name" value="DHQ_synthase"/>
    <property type="match status" value="1"/>
</dbReference>
<dbReference type="Pfam" id="PF24621">
    <property type="entry name" value="DHQS_C"/>
    <property type="match status" value="1"/>
</dbReference>
<dbReference type="Pfam" id="PF01487">
    <property type="entry name" value="DHquinase_I"/>
    <property type="match status" value="1"/>
</dbReference>
<dbReference type="Pfam" id="PF00275">
    <property type="entry name" value="EPSP_synthase"/>
    <property type="match status" value="1"/>
</dbReference>
<dbReference type="Pfam" id="PF18317">
    <property type="entry name" value="SDH_C"/>
    <property type="match status" value="1"/>
</dbReference>
<dbReference type="Pfam" id="PF08501">
    <property type="entry name" value="Shikimate_dh_N"/>
    <property type="match status" value="1"/>
</dbReference>
<dbReference type="Pfam" id="PF01202">
    <property type="entry name" value="SKI"/>
    <property type="match status" value="1"/>
</dbReference>
<dbReference type="PIRSF" id="PIRSF000514">
    <property type="entry name" value="Pentafunct_AroM"/>
    <property type="match status" value="1"/>
</dbReference>
<dbReference type="PRINTS" id="PR01100">
    <property type="entry name" value="SHIKIMTKNASE"/>
</dbReference>
<dbReference type="SUPFAM" id="SSF51569">
    <property type="entry name" value="Aldolase"/>
    <property type="match status" value="1"/>
</dbReference>
<dbReference type="SUPFAM" id="SSF53223">
    <property type="entry name" value="Aminoacid dehydrogenase-like, N-terminal domain"/>
    <property type="match status" value="1"/>
</dbReference>
<dbReference type="SUPFAM" id="SSF56796">
    <property type="entry name" value="Dehydroquinate synthase-like"/>
    <property type="match status" value="1"/>
</dbReference>
<dbReference type="SUPFAM" id="SSF55205">
    <property type="entry name" value="EPT/RTPC-like"/>
    <property type="match status" value="1"/>
</dbReference>
<dbReference type="SUPFAM" id="SSF51735">
    <property type="entry name" value="NAD(P)-binding Rossmann-fold domains"/>
    <property type="match status" value="1"/>
</dbReference>
<dbReference type="SUPFAM" id="SSF52540">
    <property type="entry name" value="P-loop containing nucleoside triphosphate hydrolases"/>
    <property type="match status" value="1"/>
</dbReference>
<dbReference type="PROSITE" id="PS00104">
    <property type="entry name" value="EPSP_SYNTHASE_1"/>
    <property type="match status" value="1"/>
</dbReference>
<dbReference type="PROSITE" id="PS00885">
    <property type="entry name" value="EPSP_SYNTHASE_2"/>
    <property type="match status" value="1"/>
</dbReference>
<keyword id="KW-0002">3D-structure</keyword>
<keyword id="KW-0028">Amino-acid biosynthesis</keyword>
<keyword id="KW-0057">Aromatic amino acid biosynthesis</keyword>
<keyword id="KW-0067">ATP-binding</keyword>
<keyword id="KW-0963">Cytoplasm</keyword>
<keyword id="KW-0418">Kinase</keyword>
<keyword id="KW-0456">Lyase</keyword>
<keyword id="KW-0479">Metal-binding</keyword>
<keyword id="KW-0511">Multifunctional enzyme</keyword>
<keyword id="KW-0521">NADP</keyword>
<keyword id="KW-0547">Nucleotide-binding</keyword>
<keyword id="KW-0560">Oxidoreductase</keyword>
<keyword id="KW-1185">Reference proteome</keyword>
<keyword id="KW-0808">Transferase</keyword>
<keyword id="KW-0862">Zinc</keyword>
<gene>
    <name evidence="1" type="primary">aro1</name>
    <name type="ORF">SPAC1834.02</name>
</gene>
<proteinExistence type="evidence at protein level"/>
<feature type="chain" id="PRO_0000140861" description="Pentafunctional AROM polypeptide">
    <location>
        <begin position="1"/>
        <end position="1573"/>
    </location>
</feature>
<feature type="region of interest" description="3-dehydroquinate synthase">
    <location>
        <begin position="1"/>
        <end position="384"/>
    </location>
</feature>
<feature type="region of interest" description="EPSP synthase">
    <location>
        <begin position="397"/>
        <end position="843"/>
    </location>
</feature>
<feature type="region of interest" description="Shikimate kinase">
    <location>
        <begin position="863"/>
        <end position="1058"/>
    </location>
</feature>
<feature type="region of interest" description="3-dehydroquinase">
    <location>
        <begin position="1059"/>
        <end position="1280"/>
    </location>
</feature>
<feature type="region of interest" description="Shikimate dehydrogenase">
    <location>
        <begin position="1293"/>
        <end position="1573"/>
    </location>
</feature>
<feature type="active site" description="Proton acceptor; for 3-dehydroquinate synthase activity" evidence="1">
    <location>
        <position position="260"/>
    </location>
</feature>
<feature type="active site" description="Proton acceptor; for 3-dehydroquinate synthase activity" evidence="1">
    <location>
        <position position="275"/>
    </location>
</feature>
<feature type="active site" description="For EPSP synthase activity" evidence="1">
    <location>
        <position position="825"/>
    </location>
</feature>
<feature type="active site" description="Proton acceptor; for 3-dehydroquinate dehydratase activity" evidence="1">
    <location>
        <position position="1182"/>
    </location>
</feature>
<feature type="active site" description="Schiff-base intermediate with substrate; for 3-dehydroquinate dehydratase activity" evidence="1">
    <location>
        <position position="1211"/>
    </location>
</feature>
<feature type="binding site" evidence="1">
    <location>
        <begin position="46"/>
        <end position="48"/>
    </location>
    <ligand>
        <name>NAD(+)</name>
        <dbReference type="ChEBI" id="CHEBI:57540"/>
    </ligand>
</feature>
<feature type="binding site" evidence="1">
    <location>
        <begin position="83"/>
        <end position="86"/>
    </location>
    <ligand>
        <name>NAD(+)</name>
        <dbReference type="ChEBI" id="CHEBI:57540"/>
    </ligand>
</feature>
<feature type="binding site" evidence="1">
    <location>
        <begin position="114"/>
        <end position="116"/>
    </location>
    <ligand>
        <name>NAD(+)</name>
        <dbReference type="ChEBI" id="CHEBI:57540"/>
    </ligand>
</feature>
<feature type="binding site" evidence="1">
    <location>
        <position position="119"/>
    </location>
    <ligand>
        <name>NAD(+)</name>
        <dbReference type="ChEBI" id="CHEBI:57540"/>
    </ligand>
</feature>
<feature type="binding site" evidence="1">
    <location>
        <position position="130"/>
    </location>
    <ligand>
        <name>7-phospho-2-dehydro-3-deoxy-D-arabino-heptonate</name>
        <dbReference type="ChEBI" id="CHEBI:58394"/>
    </ligand>
</feature>
<feature type="binding site" evidence="1">
    <location>
        <begin position="139"/>
        <end position="140"/>
    </location>
    <ligand>
        <name>NAD(+)</name>
        <dbReference type="ChEBI" id="CHEBI:57540"/>
    </ligand>
</feature>
<feature type="binding site" evidence="1">
    <location>
        <position position="146"/>
    </location>
    <ligand>
        <name>7-phospho-2-dehydro-3-deoxy-D-arabino-heptonate</name>
        <dbReference type="ChEBI" id="CHEBI:58394"/>
    </ligand>
</feature>
<feature type="binding site" evidence="1">
    <location>
        <position position="152"/>
    </location>
    <ligand>
        <name>7-phospho-2-dehydro-3-deoxy-D-arabino-heptonate</name>
        <dbReference type="ChEBI" id="CHEBI:58394"/>
    </ligand>
</feature>
<feature type="binding site" evidence="1">
    <location>
        <position position="161"/>
    </location>
    <ligand>
        <name>NAD(+)</name>
        <dbReference type="ChEBI" id="CHEBI:57540"/>
    </ligand>
</feature>
<feature type="binding site" evidence="1">
    <location>
        <position position="162"/>
    </location>
    <ligand>
        <name>7-phospho-2-dehydro-3-deoxy-D-arabino-heptonate</name>
        <dbReference type="ChEBI" id="CHEBI:58394"/>
    </ligand>
</feature>
<feature type="binding site" evidence="1">
    <location>
        <begin position="179"/>
        <end position="182"/>
    </location>
    <ligand>
        <name>NAD(+)</name>
        <dbReference type="ChEBI" id="CHEBI:57540"/>
    </ligand>
</feature>
<feature type="binding site" evidence="1">
    <location>
        <position position="190"/>
    </location>
    <ligand>
        <name>NAD(+)</name>
        <dbReference type="ChEBI" id="CHEBI:57540"/>
    </ligand>
</feature>
<feature type="binding site" evidence="1">
    <location>
        <begin position="194"/>
        <end position="197"/>
    </location>
    <ligand>
        <name>7-phospho-2-dehydro-3-deoxy-D-arabino-heptonate</name>
        <dbReference type="ChEBI" id="CHEBI:58394"/>
    </ligand>
</feature>
<feature type="binding site" evidence="1">
    <location>
        <position position="194"/>
    </location>
    <ligand>
        <name>Zn(2+)</name>
        <dbReference type="ChEBI" id="CHEBI:29105"/>
        <note>catalytic</note>
    </ligand>
</feature>
<feature type="binding site" evidence="1">
    <location>
        <position position="250"/>
    </location>
    <ligand>
        <name>7-phospho-2-dehydro-3-deoxy-D-arabino-heptonate</name>
        <dbReference type="ChEBI" id="CHEBI:58394"/>
    </ligand>
</feature>
<feature type="binding site" evidence="1">
    <location>
        <begin position="264"/>
        <end position="268"/>
    </location>
    <ligand>
        <name>7-phospho-2-dehydro-3-deoxy-D-arabino-heptonate</name>
        <dbReference type="ChEBI" id="CHEBI:58394"/>
    </ligand>
</feature>
<feature type="binding site" evidence="1">
    <location>
        <position position="271"/>
    </location>
    <ligand>
        <name>7-phospho-2-dehydro-3-deoxy-D-arabino-heptonate</name>
        <dbReference type="ChEBI" id="CHEBI:58394"/>
    </ligand>
</feature>
<feature type="binding site" evidence="1">
    <location>
        <position position="271"/>
    </location>
    <ligand>
        <name>Zn(2+)</name>
        <dbReference type="ChEBI" id="CHEBI:29105"/>
        <note>catalytic</note>
    </ligand>
</feature>
<feature type="binding site" evidence="1">
    <location>
        <position position="287"/>
    </location>
    <ligand>
        <name>7-phospho-2-dehydro-3-deoxy-D-arabino-heptonate</name>
        <dbReference type="ChEBI" id="CHEBI:58394"/>
    </ligand>
</feature>
<feature type="binding site" evidence="1">
    <location>
        <position position="287"/>
    </location>
    <ligand>
        <name>Zn(2+)</name>
        <dbReference type="ChEBI" id="CHEBI:29105"/>
        <note>catalytic</note>
    </ligand>
</feature>
<feature type="binding site" evidence="1">
    <location>
        <position position="356"/>
    </location>
    <ligand>
        <name>7-phospho-2-dehydro-3-deoxy-D-arabino-heptonate</name>
        <dbReference type="ChEBI" id="CHEBI:58394"/>
    </ligand>
</feature>
<feature type="binding site" evidence="1">
    <location>
        <begin position="870"/>
        <end position="877"/>
    </location>
    <ligand>
        <name>ATP</name>
        <dbReference type="ChEBI" id="CHEBI:30616"/>
    </ligand>
</feature>
<feature type="helix" evidence="2">
    <location>
        <begin position="1045"/>
        <end position="1050"/>
    </location>
</feature>
<feature type="strand" evidence="2">
    <location>
        <begin position="1055"/>
        <end position="1059"/>
    </location>
</feature>
<feature type="helix" evidence="2">
    <location>
        <begin position="1064"/>
        <end position="1067"/>
    </location>
</feature>
<feature type="turn" evidence="2">
    <location>
        <begin position="1068"/>
        <end position="1070"/>
    </location>
</feature>
<feature type="helix" evidence="2">
    <location>
        <begin position="1071"/>
        <end position="1074"/>
    </location>
</feature>
<feature type="turn" evidence="2">
    <location>
        <begin position="1075"/>
        <end position="1077"/>
    </location>
</feature>
<feature type="strand" evidence="2">
    <location>
        <begin position="1079"/>
        <end position="1084"/>
    </location>
</feature>
<feature type="helix" evidence="2">
    <location>
        <begin position="1085"/>
        <end position="1087"/>
    </location>
</feature>
<feature type="strand" evidence="2">
    <location>
        <begin position="1094"/>
        <end position="1097"/>
    </location>
</feature>
<feature type="helix" evidence="2">
    <location>
        <begin position="1100"/>
        <end position="1111"/>
    </location>
</feature>
<feature type="strand" evidence="2">
    <location>
        <begin position="1118"/>
        <end position="1121"/>
    </location>
</feature>
<feature type="helix" evidence="2">
    <location>
        <begin position="1125"/>
        <end position="1127"/>
    </location>
</feature>
<feature type="strand" evidence="2">
    <location>
        <begin position="1129"/>
        <end position="1131"/>
    </location>
</feature>
<feature type="helix" evidence="2">
    <location>
        <begin position="1136"/>
        <end position="1148"/>
    </location>
</feature>
<feature type="strand" evidence="2">
    <location>
        <begin position="1152"/>
        <end position="1157"/>
    </location>
</feature>
<feature type="helix" evidence="2">
    <location>
        <begin position="1162"/>
        <end position="1170"/>
    </location>
</feature>
<feature type="strand" evidence="2">
    <location>
        <begin position="1176"/>
        <end position="1182"/>
    </location>
</feature>
<feature type="strand" evidence="2">
    <location>
        <begin position="1190"/>
        <end position="1192"/>
    </location>
</feature>
<feature type="helix" evidence="2">
    <location>
        <begin position="1194"/>
        <end position="1204"/>
    </location>
</feature>
<feature type="strand" evidence="2">
    <location>
        <begin position="1208"/>
        <end position="1215"/>
    </location>
</feature>
<feature type="helix" evidence="2">
    <location>
        <begin position="1219"/>
        <end position="1235"/>
    </location>
</feature>
<feature type="strand" evidence="2">
    <location>
        <begin position="1240"/>
        <end position="1246"/>
    </location>
</feature>
<feature type="helix" evidence="2">
    <location>
        <begin position="1247"/>
        <end position="1249"/>
    </location>
</feature>
<feature type="helix" evidence="2">
    <location>
        <begin position="1250"/>
        <end position="1255"/>
    </location>
</feature>
<feature type="strand" evidence="2">
    <location>
        <begin position="1258"/>
        <end position="1263"/>
    </location>
</feature>
<feature type="strand" evidence="2">
    <location>
        <begin position="1267"/>
        <end position="1269"/>
    </location>
</feature>
<feature type="helix" evidence="2">
    <location>
        <begin position="1278"/>
        <end position="1287"/>
    </location>
</feature>
<feature type="strand" evidence="2">
    <location>
        <begin position="1295"/>
        <end position="1299"/>
    </location>
</feature>
<feature type="helix" evidence="2">
    <location>
        <begin position="1308"/>
        <end position="1319"/>
    </location>
</feature>
<feature type="strand" evidence="2">
    <location>
        <begin position="1324"/>
        <end position="1327"/>
    </location>
</feature>
<feature type="strand" evidence="2">
    <location>
        <begin position="1331"/>
        <end position="1333"/>
    </location>
</feature>
<feature type="helix" evidence="2">
    <location>
        <begin position="1334"/>
        <end position="1336"/>
    </location>
</feature>
<feature type="helix" evidence="2">
    <location>
        <begin position="1337"/>
        <end position="1340"/>
    </location>
</feature>
<feature type="strand" evidence="2">
    <location>
        <begin position="1345"/>
        <end position="1350"/>
    </location>
</feature>
<feature type="turn" evidence="2">
    <location>
        <begin position="1355"/>
        <end position="1358"/>
    </location>
</feature>
<feature type="helix" evidence="2">
    <location>
        <begin position="1359"/>
        <end position="1361"/>
    </location>
</feature>
<feature type="strand" evidence="2">
    <location>
        <begin position="1363"/>
        <end position="1365"/>
    </location>
</feature>
<feature type="helix" evidence="2">
    <location>
        <begin position="1367"/>
        <end position="1372"/>
    </location>
</feature>
<feature type="strand" evidence="2">
    <location>
        <begin position="1376"/>
        <end position="1385"/>
    </location>
</feature>
<feature type="strand" evidence="2">
    <location>
        <begin position="1387"/>
        <end position="1392"/>
    </location>
</feature>
<feature type="helix" evidence="2">
    <location>
        <begin position="1395"/>
        <end position="1406"/>
    </location>
</feature>
<feature type="turn" evidence="2">
    <location>
        <begin position="1407"/>
        <end position="1409"/>
    </location>
</feature>
<feature type="strand" evidence="2">
    <location>
        <begin position="1416"/>
        <end position="1420"/>
    </location>
</feature>
<feature type="helix" evidence="2">
    <location>
        <begin position="1424"/>
        <end position="1435"/>
    </location>
</feature>
<feature type="strand" evidence="2">
    <location>
        <begin position="1439"/>
        <end position="1446"/>
    </location>
</feature>
<feature type="helix" evidence="2">
    <location>
        <begin position="1448"/>
        <end position="1455"/>
    </location>
</feature>
<feature type="strand" evidence="2">
    <location>
        <begin position="1464"/>
        <end position="1471"/>
    </location>
</feature>
<feature type="helix" evidence="2">
    <location>
        <begin position="1474"/>
        <end position="1478"/>
    </location>
</feature>
<feature type="strand" evidence="2">
    <location>
        <begin position="1482"/>
        <end position="1487"/>
    </location>
</feature>
<feature type="strand" evidence="2">
    <location>
        <begin position="1491"/>
        <end position="1493"/>
    </location>
</feature>
<feature type="helix" evidence="2">
    <location>
        <begin position="1497"/>
        <end position="1508"/>
    </location>
</feature>
<feature type="strand" evidence="2">
    <location>
        <begin position="1509"/>
        <end position="1518"/>
    </location>
</feature>
<feature type="strand" evidence="2">
    <location>
        <begin position="1522"/>
        <end position="1525"/>
    </location>
</feature>
<feature type="helix" evidence="2">
    <location>
        <begin position="1527"/>
        <end position="1534"/>
    </location>
</feature>
<feature type="strand" evidence="2">
    <location>
        <begin position="1538"/>
        <end position="1540"/>
    </location>
</feature>
<feature type="helix" evidence="2">
    <location>
        <begin position="1542"/>
        <end position="1558"/>
    </location>
</feature>
<feature type="helix" evidence="2">
    <location>
        <begin position="1564"/>
        <end position="1572"/>
    </location>
</feature>
<organism>
    <name type="scientific">Schizosaccharomyces pombe (strain 972 / ATCC 24843)</name>
    <name type="common">Fission yeast</name>
    <dbReference type="NCBI Taxonomy" id="284812"/>
    <lineage>
        <taxon>Eukaryota</taxon>
        <taxon>Fungi</taxon>
        <taxon>Dikarya</taxon>
        <taxon>Ascomycota</taxon>
        <taxon>Taphrinomycotina</taxon>
        <taxon>Schizosaccharomycetes</taxon>
        <taxon>Schizosaccharomycetales</taxon>
        <taxon>Schizosaccharomycetaceae</taxon>
        <taxon>Schizosaccharomyces</taxon>
    </lineage>
</organism>